<comment type="function">
    <text evidence="1">Serine protease inhibitor (By similarity). Does not inhibit plasmin, and does not reduce blood loss in the mouse tail vein blood loss model.</text>
</comment>
<comment type="subcellular location">
    <subcellularLocation>
        <location evidence="1">Secreted</location>
    </subcellularLocation>
</comment>
<comment type="tissue specificity">
    <text>Expressed by the venom gland.</text>
</comment>
<comment type="similarity">
    <text evidence="5">Belongs to the venom Kunitz-type family.</text>
</comment>
<dbReference type="EMBL" id="AF402326">
    <property type="protein sequence ID" value="AAK95521.1"/>
    <property type="molecule type" value="mRNA"/>
</dbReference>
<dbReference type="SMR" id="Q90W99"/>
<dbReference type="MEROPS" id="I02.052"/>
<dbReference type="GO" id="GO:0005576">
    <property type="term" value="C:extracellular region"/>
    <property type="evidence" value="ECO:0007669"/>
    <property type="project" value="UniProtKB-SubCell"/>
</dbReference>
<dbReference type="GO" id="GO:0004867">
    <property type="term" value="F:serine-type endopeptidase inhibitor activity"/>
    <property type="evidence" value="ECO:0007669"/>
    <property type="project" value="UniProtKB-KW"/>
</dbReference>
<dbReference type="CDD" id="cd22594">
    <property type="entry name" value="Kunitz_textilinin-like"/>
    <property type="match status" value="1"/>
</dbReference>
<dbReference type="FunFam" id="4.10.410.10:FF:000021">
    <property type="entry name" value="Serine protease inhibitor, putative"/>
    <property type="match status" value="1"/>
</dbReference>
<dbReference type="Gene3D" id="4.10.410.10">
    <property type="entry name" value="Pancreatic trypsin inhibitor Kunitz domain"/>
    <property type="match status" value="1"/>
</dbReference>
<dbReference type="InterPro" id="IPR002223">
    <property type="entry name" value="Kunitz_BPTI"/>
</dbReference>
<dbReference type="InterPro" id="IPR036880">
    <property type="entry name" value="Kunitz_BPTI_sf"/>
</dbReference>
<dbReference type="InterPro" id="IPR020901">
    <property type="entry name" value="Prtase_inh_Kunz-CS"/>
</dbReference>
<dbReference type="InterPro" id="IPR050098">
    <property type="entry name" value="TFPI/VKTCI-like"/>
</dbReference>
<dbReference type="PANTHER" id="PTHR10083">
    <property type="entry name" value="KUNITZ-TYPE PROTEASE INHIBITOR-RELATED"/>
    <property type="match status" value="1"/>
</dbReference>
<dbReference type="Pfam" id="PF00014">
    <property type="entry name" value="Kunitz_BPTI"/>
    <property type="match status" value="1"/>
</dbReference>
<dbReference type="PRINTS" id="PR00759">
    <property type="entry name" value="BASICPTASE"/>
</dbReference>
<dbReference type="SMART" id="SM00131">
    <property type="entry name" value="KU"/>
    <property type="match status" value="1"/>
</dbReference>
<dbReference type="SUPFAM" id="SSF57362">
    <property type="entry name" value="BPTI-like"/>
    <property type="match status" value="1"/>
</dbReference>
<dbReference type="PROSITE" id="PS00280">
    <property type="entry name" value="BPTI_KUNITZ_1"/>
    <property type="match status" value="1"/>
</dbReference>
<dbReference type="PROSITE" id="PS50279">
    <property type="entry name" value="BPTI_KUNITZ_2"/>
    <property type="match status" value="1"/>
</dbReference>
<protein>
    <recommendedName>
        <fullName evidence="4">Kunitz-type serine protease inhibitor textilinin-3</fullName>
        <shortName evidence="4">Txln-3</shortName>
    </recommendedName>
</protein>
<name>VKT3_PSETT</name>
<proteinExistence type="evidence at transcript level"/>
<accession>Q90W99</accession>
<organism>
    <name type="scientific">Pseudonaja textilis textilis</name>
    <name type="common">Eastern brown snake</name>
    <dbReference type="NCBI Taxonomy" id="169397"/>
    <lineage>
        <taxon>Eukaryota</taxon>
        <taxon>Metazoa</taxon>
        <taxon>Chordata</taxon>
        <taxon>Craniata</taxon>
        <taxon>Vertebrata</taxon>
        <taxon>Euteleostomi</taxon>
        <taxon>Lepidosauria</taxon>
        <taxon>Squamata</taxon>
        <taxon>Bifurcata</taxon>
        <taxon>Unidentata</taxon>
        <taxon>Episquamata</taxon>
        <taxon>Toxicofera</taxon>
        <taxon>Serpentes</taxon>
        <taxon>Colubroidea</taxon>
        <taxon>Elapidae</taxon>
        <taxon>Hydrophiinae</taxon>
        <taxon>Pseudonaja</taxon>
    </lineage>
</organism>
<keyword id="KW-1015">Disulfide bond</keyword>
<keyword id="KW-0646">Protease inhibitor</keyword>
<keyword id="KW-0964">Secreted</keyword>
<keyword id="KW-0722">Serine protease inhibitor</keyword>
<keyword id="KW-0732">Signal</keyword>
<reference key="1">
    <citation type="journal article" date="2002" name="Br. J. Haematol.">
        <title>A family of textilinin genes, two of which encode proteins with antihaemorrhagic properties.</title>
        <authorList>
            <person name="Filippovich I."/>
            <person name="Sorokina N."/>
            <person name="Masci P.P."/>
            <person name="de Jersey J."/>
            <person name="Whitaker A.N."/>
            <person name="Winzor D.J."/>
            <person name="Gaffney P.J."/>
            <person name="Lavin M.F."/>
        </authorList>
    </citation>
    <scope>NUCLEOTIDE SEQUENCE [MRNA]</scope>
    <source>
        <tissue>Venom gland</tissue>
    </source>
</reference>
<feature type="signal peptide" evidence="2">
    <location>
        <begin position="1"/>
        <end position="24"/>
    </location>
</feature>
<feature type="chain" id="PRO_0000376902" description="Kunitz-type serine protease inhibitor textilinin-3">
    <location>
        <begin position="25"/>
        <end position="83"/>
    </location>
</feature>
<feature type="domain" description="BPTI/Kunitz inhibitor" evidence="3">
    <location>
        <begin position="31"/>
        <end position="81"/>
    </location>
</feature>
<feature type="site" description="Reactive bond for chymotrypsin" evidence="1">
    <location>
        <begin position="41"/>
        <end position="42"/>
    </location>
</feature>
<feature type="disulfide bond" evidence="3">
    <location>
        <begin position="31"/>
        <end position="81"/>
    </location>
</feature>
<feature type="disulfide bond" evidence="3">
    <location>
        <begin position="40"/>
        <end position="64"/>
    </location>
</feature>
<feature type="disulfide bond" evidence="3">
    <location>
        <begin position="56"/>
        <end position="77"/>
    </location>
</feature>
<sequence length="83" mass="9158">MSSGGLLLLLGLLTLWEVLTPVSSKDRPNFCKLPAETGRCNAKIPRFYYNPRQHQCIEFLYGGCGGNANNFKTIKECESTCAA</sequence>
<evidence type="ECO:0000250" key="1"/>
<evidence type="ECO:0000255" key="2"/>
<evidence type="ECO:0000255" key="3">
    <source>
        <dbReference type="PROSITE-ProRule" id="PRU00031"/>
    </source>
</evidence>
<evidence type="ECO:0000303" key="4">
    <source>
    </source>
</evidence>
<evidence type="ECO:0000305" key="5"/>